<reference key="1">
    <citation type="journal article" date="2011" name="Proc. Natl. Acad. Sci. U.S.A.">
        <title>Genomic anatomy of Escherichia coli O157:H7 outbreaks.</title>
        <authorList>
            <person name="Eppinger M."/>
            <person name="Mammel M.K."/>
            <person name="Leclerc J.E."/>
            <person name="Ravel J."/>
            <person name="Cebula T.A."/>
        </authorList>
    </citation>
    <scope>NUCLEOTIDE SEQUENCE [LARGE SCALE GENOMIC DNA]</scope>
    <source>
        <strain>EC4115 / EHEC</strain>
    </source>
</reference>
<accession>B5YPW5</accession>
<name>CITD_ECO5E</name>
<comment type="function">
    <text evidence="1">Covalent carrier of the coenzyme of citrate lyase.</text>
</comment>
<comment type="subunit">
    <text evidence="1">Oligomer with a subunit composition of (alpha,beta,gamma)6.</text>
</comment>
<comment type="subcellular location">
    <subcellularLocation>
        <location evidence="1">Cytoplasm</location>
    </subcellularLocation>
</comment>
<comment type="similarity">
    <text evidence="1">Belongs to the CitD family.</text>
</comment>
<keyword id="KW-0963">Cytoplasm</keyword>
<keyword id="KW-0597">Phosphoprotein</keyword>
<sequence length="98" mass="10689">MKINQPAVAGTLESGDVMIRIAPLDTQDIDLQINSSVEKQFGDAIRTTILDVLARYNVRGVQLNVDDKGALDCILRARLEALLARASGIPALPWEDCQ</sequence>
<protein>
    <recommendedName>
        <fullName evidence="1">Citrate lyase acyl carrier protein</fullName>
    </recommendedName>
    <alternativeName>
        <fullName evidence="1">Citrate lyase gamma chain</fullName>
    </alternativeName>
</protein>
<feature type="chain" id="PRO_1000133965" description="Citrate lyase acyl carrier protein">
    <location>
        <begin position="1"/>
        <end position="98"/>
    </location>
</feature>
<feature type="modified residue" description="O-(phosphoribosyl dephospho-coenzyme A)serine" evidence="1">
    <location>
        <position position="14"/>
    </location>
</feature>
<gene>
    <name evidence="1" type="primary">citD</name>
    <name type="ordered locus">ECH74115_0705</name>
</gene>
<proteinExistence type="inferred from homology"/>
<dbReference type="EMBL" id="CP001164">
    <property type="protein sequence ID" value="ACI36478.1"/>
    <property type="molecule type" value="Genomic_DNA"/>
</dbReference>
<dbReference type="RefSeq" id="WP_000700703.1">
    <property type="nucleotide sequence ID" value="NC_011353.1"/>
</dbReference>
<dbReference type="SMR" id="B5YPW5"/>
<dbReference type="GeneID" id="93776868"/>
<dbReference type="KEGG" id="ecf:ECH74115_0705"/>
<dbReference type="HOGENOM" id="CLU_158489_0_0_6"/>
<dbReference type="GO" id="GO:0005737">
    <property type="term" value="C:cytoplasm"/>
    <property type="evidence" value="ECO:0007669"/>
    <property type="project" value="UniProtKB-SubCell"/>
</dbReference>
<dbReference type="HAMAP" id="MF_00805">
    <property type="entry name" value="CitD"/>
    <property type="match status" value="1"/>
</dbReference>
<dbReference type="InterPro" id="IPR006495">
    <property type="entry name" value="CitD"/>
</dbReference>
<dbReference type="InterPro" id="IPR023439">
    <property type="entry name" value="Mal_deCO2ase/Cit_lyase_ACP"/>
</dbReference>
<dbReference type="NCBIfam" id="TIGR01608">
    <property type="entry name" value="citD"/>
    <property type="match status" value="1"/>
</dbReference>
<dbReference type="NCBIfam" id="NF009726">
    <property type="entry name" value="PRK13253.1"/>
    <property type="match status" value="1"/>
</dbReference>
<dbReference type="Pfam" id="PF06857">
    <property type="entry name" value="ACP"/>
    <property type="match status" value="1"/>
</dbReference>
<dbReference type="PIRSF" id="PIRSF002736">
    <property type="entry name" value="Citrt_lyas_gamma"/>
    <property type="match status" value="1"/>
</dbReference>
<evidence type="ECO:0000255" key="1">
    <source>
        <dbReference type="HAMAP-Rule" id="MF_00805"/>
    </source>
</evidence>
<organism>
    <name type="scientific">Escherichia coli O157:H7 (strain EC4115 / EHEC)</name>
    <dbReference type="NCBI Taxonomy" id="444450"/>
    <lineage>
        <taxon>Bacteria</taxon>
        <taxon>Pseudomonadati</taxon>
        <taxon>Pseudomonadota</taxon>
        <taxon>Gammaproteobacteria</taxon>
        <taxon>Enterobacterales</taxon>
        <taxon>Enterobacteriaceae</taxon>
        <taxon>Escherichia</taxon>
    </lineage>
</organism>